<name>SYI_CUPNH</name>
<dbReference type="EC" id="6.1.1.5" evidence="1"/>
<dbReference type="EMBL" id="AM260479">
    <property type="protein sequence ID" value="CAJ94121.1"/>
    <property type="molecule type" value="Genomic_DNA"/>
</dbReference>
<dbReference type="RefSeq" id="WP_011615965.1">
    <property type="nucleotide sequence ID" value="NC_008313.1"/>
</dbReference>
<dbReference type="SMR" id="Q0K7A0"/>
<dbReference type="STRING" id="381666.H16_A3046"/>
<dbReference type="KEGG" id="reh:H16_A3046"/>
<dbReference type="PATRIC" id="fig|381666.6.peg.3447"/>
<dbReference type="eggNOG" id="COG0060">
    <property type="taxonomic scope" value="Bacteria"/>
</dbReference>
<dbReference type="HOGENOM" id="CLU_001493_7_1_4"/>
<dbReference type="OrthoDB" id="9810365at2"/>
<dbReference type="Proteomes" id="UP000008210">
    <property type="component" value="Chromosome 1"/>
</dbReference>
<dbReference type="GO" id="GO:0005829">
    <property type="term" value="C:cytosol"/>
    <property type="evidence" value="ECO:0007669"/>
    <property type="project" value="TreeGrafter"/>
</dbReference>
<dbReference type="GO" id="GO:0002161">
    <property type="term" value="F:aminoacyl-tRNA deacylase activity"/>
    <property type="evidence" value="ECO:0007669"/>
    <property type="project" value="InterPro"/>
</dbReference>
<dbReference type="GO" id="GO:0005524">
    <property type="term" value="F:ATP binding"/>
    <property type="evidence" value="ECO:0007669"/>
    <property type="project" value="UniProtKB-UniRule"/>
</dbReference>
<dbReference type="GO" id="GO:0004822">
    <property type="term" value="F:isoleucine-tRNA ligase activity"/>
    <property type="evidence" value="ECO:0007669"/>
    <property type="project" value="UniProtKB-UniRule"/>
</dbReference>
<dbReference type="GO" id="GO:0000049">
    <property type="term" value="F:tRNA binding"/>
    <property type="evidence" value="ECO:0007669"/>
    <property type="project" value="InterPro"/>
</dbReference>
<dbReference type="GO" id="GO:0008270">
    <property type="term" value="F:zinc ion binding"/>
    <property type="evidence" value="ECO:0007669"/>
    <property type="project" value="UniProtKB-UniRule"/>
</dbReference>
<dbReference type="GO" id="GO:0006428">
    <property type="term" value="P:isoleucyl-tRNA aminoacylation"/>
    <property type="evidence" value="ECO:0007669"/>
    <property type="project" value="UniProtKB-UniRule"/>
</dbReference>
<dbReference type="CDD" id="cd07960">
    <property type="entry name" value="Anticodon_Ia_Ile_BEm"/>
    <property type="match status" value="1"/>
</dbReference>
<dbReference type="CDD" id="cd00818">
    <property type="entry name" value="IleRS_core"/>
    <property type="match status" value="1"/>
</dbReference>
<dbReference type="FunFam" id="3.40.50.620:FF:000042">
    <property type="entry name" value="Isoleucine--tRNA ligase"/>
    <property type="match status" value="1"/>
</dbReference>
<dbReference type="FunFam" id="3.40.50.620:FF:000048">
    <property type="entry name" value="Isoleucine--tRNA ligase"/>
    <property type="match status" value="1"/>
</dbReference>
<dbReference type="Gene3D" id="1.10.730.20">
    <property type="match status" value="1"/>
</dbReference>
<dbReference type="Gene3D" id="3.40.50.620">
    <property type="entry name" value="HUPs"/>
    <property type="match status" value="2"/>
</dbReference>
<dbReference type="Gene3D" id="3.90.740.10">
    <property type="entry name" value="Valyl/Leucyl/Isoleucyl-tRNA synthetase, editing domain"/>
    <property type="match status" value="1"/>
</dbReference>
<dbReference type="HAMAP" id="MF_02002">
    <property type="entry name" value="Ile_tRNA_synth_type1"/>
    <property type="match status" value="1"/>
</dbReference>
<dbReference type="InterPro" id="IPR001412">
    <property type="entry name" value="aa-tRNA-synth_I_CS"/>
</dbReference>
<dbReference type="InterPro" id="IPR002300">
    <property type="entry name" value="aa-tRNA-synth_Ia"/>
</dbReference>
<dbReference type="InterPro" id="IPR033708">
    <property type="entry name" value="Anticodon_Ile_BEm"/>
</dbReference>
<dbReference type="InterPro" id="IPR002301">
    <property type="entry name" value="Ile-tRNA-ligase"/>
</dbReference>
<dbReference type="InterPro" id="IPR023585">
    <property type="entry name" value="Ile-tRNA-ligase_type1"/>
</dbReference>
<dbReference type="InterPro" id="IPR050081">
    <property type="entry name" value="Ile-tRNA_ligase"/>
</dbReference>
<dbReference type="InterPro" id="IPR013155">
    <property type="entry name" value="M/V/L/I-tRNA-synth_anticd-bd"/>
</dbReference>
<dbReference type="InterPro" id="IPR014729">
    <property type="entry name" value="Rossmann-like_a/b/a_fold"/>
</dbReference>
<dbReference type="InterPro" id="IPR009080">
    <property type="entry name" value="tRNAsynth_Ia_anticodon-bd"/>
</dbReference>
<dbReference type="InterPro" id="IPR009008">
    <property type="entry name" value="Val/Leu/Ile-tRNA-synth_edit"/>
</dbReference>
<dbReference type="InterPro" id="IPR010663">
    <property type="entry name" value="Znf_FPG/IleRS"/>
</dbReference>
<dbReference type="NCBIfam" id="TIGR00392">
    <property type="entry name" value="ileS"/>
    <property type="match status" value="1"/>
</dbReference>
<dbReference type="PANTHER" id="PTHR42765:SF1">
    <property type="entry name" value="ISOLEUCINE--TRNA LIGASE, MITOCHONDRIAL"/>
    <property type="match status" value="1"/>
</dbReference>
<dbReference type="PANTHER" id="PTHR42765">
    <property type="entry name" value="SOLEUCYL-TRNA SYNTHETASE"/>
    <property type="match status" value="1"/>
</dbReference>
<dbReference type="Pfam" id="PF08264">
    <property type="entry name" value="Anticodon_1"/>
    <property type="match status" value="1"/>
</dbReference>
<dbReference type="Pfam" id="PF00133">
    <property type="entry name" value="tRNA-synt_1"/>
    <property type="match status" value="1"/>
</dbReference>
<dbReference type="Pfam" id="PF06827">
    <property type="entry name" value="zf-FPG_IleRS"/>
    <property type="match status" value="1"/>
</dbReference>
<dbReference type="PRINTS" id="PR00984">
    <property type="entry name" value="TRNASYNTHILE"/>
</dbReference>
<dbReference type="SUPFAM" id="SSF47323">
    <property type="entry name" value="Anticodon-binding domain of a subclass of class I aminoacyl-tRNA synthetases"/>
    <property type="match status" value="1"/>
</dbReference>
<dbReference type="SUPFAM" id="SSF52374">
    <property type="entry name" value="Nucleotidylyl transferase"/>
    <property type="match status" value="1"/>
</dbReference>
<dbReference type="SUPFAM" id="SSF50677">
    <property type="entry name" value="ValRS/IleRS/LeuRS editing domain"/>
    <property type="match status" value="1"/>
</dbReference>
<dbReference type="PROSITE" id="PS00178">
    <property type="entry name" value="AA_TRNA_LIGASE_I"/>
    <property type="match status" value="1"/>
</dbReference>
<reference key="1">
    <citation type="journal article" date="2006" name="Nat. Biotechnol.">
        <title>Genome sequence of the bioplastic-producing 'Knallgas' bacterium Ralstonia eutropha H16.</title>
        <authorList>
            <person name="Pohlmann A."/>
            <person name="Fricke W.F."/>
            <person name="Reinecke F."/>
            <person name="Kusian B."/>
            <person name="Liesegang H."/>
            <person name="Cramm R."/>
            <person name="Eitinger T."/>
            <person name="Ewering C."/>
            <person name="Poetter M."/>
            <person name="Schwartz E."/>
            <person name="Strittmatter A."/>
            <person name="Voss I."/>
            <person name="Gottschalk G."/>
            <person name="Steinbuechel A."/>
            <person name="Friedrich B."/>
            <person name="Bowien B."/>
        </authorList>
    </citation>
    <scope>NUCLEOTIDE SEQUENCE [LARGE SCALE GENOMIC DNA]</scope>
    <source>
        <strain>ATCC 17699 / DSM 428 / KCTC 22496 / NCIMB 10442 / H16 / Stanier 337</strain>
    </source>
</reference>
<gene>
    <name evidence="1" type="primary">ileS</name>
    <name type="ordered locus">H16_A3046</name>
</gene>
<keyword id="KW-0030">Aminoacyl-tRNA synthetase</keyword>
<keyword id="KW-0067">ATP-binding</keyword>
<keyword id="KW-0963">Cytoplasm</keyword>
<keyword id="KW-0436">Ligase</keyword>
<keyword id="KW-0479">Metal-binding</keyword>
<keyword id="KW-0547">Nucleotide-binding</keyword>
<keyword id="KW-0648">Protein biosynthesis</keyword>
<keyword id="KW-1185">Reference proteome</keyword>
<keyword id="KW-0862">Zinc</keyword>
<organism>
    <name type="scientific">Cupriavidus necator (strain ATCC 17699 / DSM 428 / KCTC 22496 / NCIMB 10442 / H16 / Stanier 337)</name>
    <name type="common">Ralstonia eutropha</name>
    <dbReference type="NCBI Taxonomy" id="381666"/>
    <lineage>
        <taxon>Bacteria</taxon>
        <taxon>Pseudomonadati</taxon>
        <taxon>Pseudomonadota</taxon>
        <taxon>Betaproteobacteria</taxon>
        <taxon>Burkholderiales</taxon>
        <taxon>Burkholderiaceae</taxon>
        <taxon>Cupriavidus</taxon>
    </lineage>
</organism>
<evidence type="ECO:0000255" key="1">
    <source>
        <dbReference type="HAMAP-Rule" id="MF_02002"/>
    </source>
</evidence>
<comment type="function">
    <text evidence="1">Catalyzes the attachment of isoleucine to tRNA(Ile). As IleRS can inadvertently accommodate and process structurally similar amino acids such as valine, to avoid such errors it has two additional distinct tRNA(Ile)-dependent editing activities. One activity is designated as 'pretransfer' editing and involves the hydrolysis of activated Val-AMP. The other activity is designated 'posttransfer' editing and involves deacylation of mischarged Val-tRNA(Ile).</text>
</comment>
<comment type="catalytic activity">
    <reaction evidence="1">
        <text>tRNA(Ile) + L-isoleucine + ATP = L-isoleucyl-tRNA(Ile) + AMP + diphosphate</text>
        <dbReference type="Rhea" id="RHEA:11060"/>
        <dbReference type="Rhea" id="RHEA-COMP:9666"/>
        <dbReference type="Rhea" id="RHEA-COMP:9695"/>
        <dbReference type="ChEBI" id="CHEBI:30616"/>
        <dbReference type="ChEBI" id="CHEBI:33019"/>
        <dbReference type="ChEBI" id="CHEBI:58045"/>
        <dbReference type="ChEBI" id="CHEBI:78442"/>
        <dbReference type="ChEBI" id="CHEBI:78528"/>
        <dbReference type="ChEBI" id="CHEBI:456215"/>
        <dbReference type="EC" id="6.1.1.5"/>
    </reaction>
</comment>
<comment type="cofactor">
    <cofactor evidence="1">
        <name>Zn(2+)</name>
        <dbReference type="ChEBI" id="CHEBI:29105"/>
    </cofactor>
    <text evidence="1">Binds 1 zinc ion per subunit.</text>
</comment>
<comment type="subunit">
    <text evidence="1">Monomer.</text>
</comment>
<comment type="subcellular location">
    <subcellularLocation>
        <location evidence="1">Cytoplasm</location>
    </subcellularLocation>
</comment>
<comment type="domain">
    <text evidence="1">IleRS has two distinct active sites: one for aminoacylation and one for editing. The misactivated valine is translocated from the active site to the editing site, which sterically excludes the correctly activated isoleucine. The single editing site contains two valyl binding pockets, one specific for each substrate (Val-AMP or Val-tRNA(Ile)).</text>
</comment>
<comment type="similarity">
    <text evidence="1">Belongs to the class-I aminoacyl-tRNA synthetase family. IleS type 1 subfamily.</text>
</comment>
<accession>Q0K7A0</accession>
<sequence>MPDDKRAKPEKSKYPVNLLDTPFPMRGDLPKREPQWVKQWQDKQLYKKIRAARKGAKKFVLHDGPPYANGDIHIGHAVNKVLKDMIIKARGLTGLDAVYVPGWDCHGMPIEIQIEKKFGKGLPVQEVQAKARAYATEQIKRQMMDFERLGVLGDWDHPYLTMNYSNEADELRALGKIMEKGYVFRGLKPVNWCFDCGSALAEAEVEYKDKVDLSIDVGFPFAQADKLAHAFKVPFEQLDGKPGWIVIWTTTPWTIPSNQALNVHPEVEYALVETPRGYLILATERVEEQLKVYGLEGKVVATTTGAALSEIRFHHPLAKMDAGYDRLSPVYLGDYVTTDTGSGIVHSAPAYGVEDFQSCKAHGMADSDIISPVMGNGVYAGTLPLFGGLSIWDANPKIVEVLQASGNLFNSHKYTHSYMHCWRHKTPIIYRATSQWFAGMDVDPADENGKTGPTLRETALAGIDATEFFPAWGKQRLHNMIANRPDWTLSRQRQWGVPMAFFLHKETGALHPRTPQLLEEVARRVEQHGIEAWQTLDPAELLGDEASQYEKNRDTLDVWFDSGTTHWSVIRGSHRDDLYDPSADEADGRLADLYLEGSDQHRGWFHSSLLTASMLYGKPPYKALLTHGFTVDGEGRKMSKSIGNTVSPQDISNKMGAEIIRLWVASTDYSGELSISDEILKRVVEGYRRIRNTLRFLLSNLSDYDHARHALPASEWLEIDRYAVALTAQLQKEVLSHYEAYEFHPVVSKLQTFCSEDLGGFYLDVLKDRLYTTAPDSKARRAAQNALYHITQAMLHWMAPFLSFTAEEAWQIFAHGTEHTDTIFTSTYYAIPEVDDGADDLLQKWHTLREVRAEVTKQLEAVRVEGEIGSSLQAELTIQAGGPVLDALQSLGDDLRFVLLTSSAKVTHAPEAGDLLVTVTPSTHAKCERCWHYRADVGHNPDHPTLCGRCDSNLFGAGEHRSHA</sequence>
<proteinExistence type="inferred from homology"/>
<protein>
    <recommendedName>
        <fullName evidence="1">Isoleucine--tRNA ligase</fullName>
        <ecNumber evidence="1">6.1.1.5</ecNumber>
    </recommendedName>
    <alternativeName>
        <fullName evidence="1">Isoleucyl-tRNA synthetase</fullName>
        <shortName evidence="1">IleRS</shortName>
    </alternativeName>
</protein>
<feature type="chain" id="PRO_1000022111" description="Isoleucine--tRNA ligase">
    <location>
        <begin position="1"/>
        <end position="964"/>
    </location>
</feature>
<feature type="short sequence motif" description="'HIGH' region">
    <location>
        <begin position="66"/>
        <end position="76"/>
    </location>
</feature>
<feature type="short sequence motif" description="'KMSKS' region">
    <location>
        <begin position="637"/>
        <end position="641"/>
    </location>
</feature>
<feature type="binding site" evidence="1">
    <location>
        <position position="596"/>
    </location>
    <ligand>
        <name>L-isoleucyl-5'-AMP</name>
        <dbReference type="ChEBI" id="CHEBI:178002"/>
    </ligand>
</feature>
<feature type="binding site" evidence="1">
    <location>
        <position position="640"/>
    </location>
    <ligand>
        <name>ATP</name>
        <dbReference type="ChEBI" id="CHEBI:30616"/>
    </ligand>
</feature>
<feature type="binding site" evidence="1">
    <location>
        <position position="927"/>
    </location>
    <ligand>
        <name>Zn(2+)</name>
        <dbReference type="ChEBI" id="CHEBI:29105"/>
    </ligand>
</feature>
<feature type="binding site" evidence="1">
    <location>
        <position position="930"/>
    </location>
    <ligand>
        <name>Zn(2+)</name>
        <dbReference type="ChEBI" id="CHEBI:29105"/>
    </ligand>
</feature>
<feature type="binding site" evidence="1">
    <location>
        <position position="947"/>
    </location>
    <ligand>
        <name>Zn(2+)</name>
        <dbReference type="ChEBI" id="CHEBI:29105"/>
    </ligand>
</feature>
<feature type="binding site" evidence="1">
    <location>
        <position position="950"/>
    </location>
    <ligand>
        <name>Zn(2+)</name>
        <dbReference type="ChEBI" id="CHEBI:29105"/>
    </ligand>
</feature>